<evidence type="ECO:0000255" key="1">
    <source>
        <dbReference type="HAMAP-Rule" id="MF_00383"/>
    </source>
</evidence>
<comment type="function">
    <text evidence="1">Stabilizes TBP binding to an archaeal box-A promoter. Also responsible for recruiting RNA polymerase II to the pre-initiation complex (DNA-TBP-TFIIB).</text>
</comment>
<comment type="similarity">
    <text evidence="1">Belongs to the TFIIB family.</text>
</comment>
<feature type="chain" id="PRO_0000119335" description="Transcription initiation factor IIB 1">
    <location>
        <begin position="1"/>
        <end position="309"/>
    </location>
</feature>
<feature type="repeat" description="1">
    <location>
        <begin position="125"/>
        <end position="208"/>
    </location>
</feature>
<feature type="repeat" description="2">
    <location>
        <begin position="219"/>
        <end position="300"/>
    </location>
</feature>
<reference key="1">
    <citation type="journal article" date="2001" name="Proc. Natl. Acad. Sci. U.S.A.">
        <title>The complete genome of the crenarchaeon Sulfolobus solfataricus P2.</title>
        <authorList>
            <person name="She Q."/>
            <person name="Singh R.K."/>
            <person name="Confalonieri F."/>
            <person name="Zivanovic Y."/>
            <person name="Allard G."/>
            <person name="Awayez M.J."/>
            <person name="Chan-Weiher C.C.-Y."/>
            <person name="Clausen I.G."/>
            <person name="Curtis B.A."/>
            <person name="De Moors A."/>
            <person name="Erauso G."/>
            <person name="Fletcher C."/>
            <person name="Gordon P.M.K."/>
            <person name="Heikamp-de Jong I."/>
            <person name="Jeffries A.C."/>
            <person name="Kozera C.J."/>
            <person name="Medina N."/>
            <person name="Peng X."/>
            <person name="Thi-Ngoc H.P."/>
            <person name="Redder P."/>
            <person name="Schenk M.E."/>
            <person name="Theriault C."/>
            <person name="Tolstrup N."/>
            <person name="Charlebois R.L."/>
            <person name="Doolittle W.F."/>
            <person name="Duguet M."/>
            <person name="Gaasterland T."/>
            <person name="Garrett R.A."/>
            <person name="Ragan M.A."/>
            <person name="Sensen C.W."/>
            <person name="Van der Oost J."/>
        </authorList>
    </citation>
    <scope>NUCLEOTIDE SEQUENCE [LARGE SCALE GENOMIC DNA]</scope>
    <source>
        <strain>ATCC 35092 / DSM 1617 / JCM 11322 / P2</strain>
    </source>
</reference>
<protein>
    <recommendedName>
        <fullName evidence="1">Transcription initiation factor IIB 1</fullName>
        <shortName evidence="1">TFIIB 1</shortName>
    </recommendedName>
</protein>
<name>TF2B1_SACS2</name>
<organism>
    <name type="scientific">Saccharolobus solfataricus (strain ATCC 35092 / DSM 1617 / JCM 11322 / P2)</name>
    <name type="common">Sulfolobus solfataricus</name>
    <dbReference type="NCBI Taxonomy" id="273057"/>
    <lineage>
        <taxon>Archaea</taxon>
        <taxon>Thermoproteota</taxon>
        <taxon>Thermoprotei</taxon>
        <taxon>Sulfolobales</taxon>
        <taxon>Sulfolobaceae</taxon>
        <taxon>Saccharolobus</taxon>
    </lineage>
</organism>
<proteinExistence type="inferred from homology"/>
<sequence>MLYLSEENKSVSTPCPPDKIIFDAERGEYICSETGEVLEDKIIDQGPEWRAFTPEEKEKRSRVGGPLNNTIHDRGLSTLIDWKDKDAMGRTLDPKRRLEALRWRKWQIRARIQSSIDRNLAQAMNELERIGNLLNLPKSVKDEAALIYRKAVEKGLVRGRSIESVVAAAIYAACRRMKLARTLDEIAQYTKANRKEVARCYRLLLRELDVSVPVSDPKDYVTRIANLLGLSGAVMKTAAEIIDKAKGSGLTAGKDPAGLAAAAIYIASLLHDERRTQKEIAQVAGVTEVTVRNRYKELTQELKISIPTQ</sequence>
<gene>
    <name evidence="1" type="primary">tfbA</name>
    <name type="synonym">tfb-1</name>
    <name type="ordered locus">SSO0446</name>
    <name type="ORF">C43_009</name>
</gene>
<keyword id="KW-1185">Reference proteome</keyword>
<keyword id="KW-0677">Repeat</keyword>
<keyword id="KW-0804">Transcription</keyword>
<keyword id="KW-0805">Transcription regulation</keyword>
<dbReference type="EMBL" id="AE006641">
    <property type="protein sequence ID" value="AAK40772.1"/>
    <property type="molecule type" value="Genomic_DNA"/>
</dbReference>
<dbReference type="PIR" id="E90189">
    <property type="entry name" value="E90189"/>
</dbReference>
<dbReference type="SMR" id="P58111"/>
<dbReference type="FunCoup" id="P58111">
    <property type="interactions" value="163"/>
</dbReference>
<dbReference type="STRING" id="273057.SSO0446"/>
<dbReference type="PaxDb" id="273057-SSO0446"/>
<dbReference type="EnsemblBacteria" id="AAK40772">
    <property type="protein sequence ID" value="AAK40772"/>
    <property type="gene ID" value="SSO0446"/>
</dbReference>
<dbReference type="KEGG" id="sso:SSO0446"/>
<dbReference type="PATRIC" id="fig|273057.12.peg.440"/>
<dbReference type="eggNOG" id="arCOG01981">
    <property type="taxonomic scope" value="Archaea"/>
</dbReference>
<dbReference type="HOGENOM" id="CLU_043736_0_1_2"/>
<dbReference type="InParanoid" id="P58111"/>
<dbReference type="PhylomeDB" id="P58111"/>
<dbReference type="Proteomes" id="UP000001974">
    <property type="component" value="Chromosome"/>
</dbReference>
<dbReference type="GO" id="GO:0097550">
    <property type="term" value="C:transcription preinitiation complex"/>
    <property type="evidence" value="ECO:0000318"/>
    <property type="project" value="GO_Central"/>
</dbReference>
<dbReference type="GO" id="GO:0003700">
    <property type="term" value="F:DNA-binding transcription factor activity"/>
    <property type="evidence" value="ECO:0007669"/>
    <property type="project" value="UniProtKB-UniRule"/>
</dbReference>
<dbReference type="GO" id="GO:0017025">
    <property type="term" value="F:TBP-class protein binding"/>
    <property type="evidence" value="ECO:0007669"/>
    <property type="project" value="InterPro"/>
</dbReference>
<dbReference type="GO" id="GO:0006352">
    <property type="term" value="P:DNA-templated transcription initiation"/>
    <property type="evidence" value="ECO:0000318"/>
    <property type="project" value="GO_Central"/>
</dbReference>
<dbReference type="GO" id="GO:0070897">
    <property type="term" value="P:transcription preinitiation complex assembly"/>
    <property type="evidence" value="ECO:0007669"/>
    <property type="project" value="InterPro"/>
</dbReference>
<dbReference type="CDD" id="cd20549">
    <property type="entry name" value="CYCLIN_TFIIB_archaea_like_rpt1"/>
    <property type="match status" value="1"/>
</dbReference>
<dbReference type="CDD" id="cd20550">
    <property type="entry name" value="CYCLIN_TFIIB_archaea_like_rpt2"/>
    <property type="match status" value="1"/>
</dbReference>
<dbReference type="FunFam" id="1.10.472.10:FF:000023">
    <property type="entry name" value="Transcription initiation factor IIB"/>
    <property type="match status" value="1"/>
</dbReference>
<dbReference type="FunFam" id="1.10.472.170:FF:000001">
    <property type="entry name" value="Transcription initiation factor IIB"/>
    <property type="match status" value="1"/>
</dbReference>
<dbReference type="Gene3D" id="1.10.472.170">
    <property type="match status" value="1"/>
</dbReference>
<dbReference type="Gene3D" id="1.10.472.10">
    <property type="entry name" value="Cyclin-like"/>
    <property type="match status" value="1"/>
</dbReference>
<dbReference type="HAMAP" id="MF_00383">
    <property type="entry name" value="TF2B_arch"/>
    <property type="match status" value="1"/>
</dbReference>
<dbReference type="InterPro" id="IPR013763">
    <property type="entry name" value="Cyclin-like_dom"/>
</dbReference>
<dbReference type="InterPro" id="IPR036915">
    <property type="entry name" value="Cyclin-like_sf"/>
</dbReference>
<dbReference type="InterPro" id="IPR000812">
    <property type="entry name" value="TFIIB"/>
</dbReference>
<dbReference type="InterPro" id="IPR023484">
    <property type="entry name" value="TFIIB_arc"/>
</dbReference>
<dbReference type="InterPro" id="IPR023486">
    <property type="entry name" value="TFIIB_CS"/>
</dbReference>
<dbReference type="InterPro" id="IPR013150">
    <property type="entry name" value="TFIIB_cyclin"/>
</dbReference>
<dbReference type="InterPro" id="IPR013137">
    <property type="entry name" value="Znf_TFIIB"/>
</dbReference>
<dbReference type="NCBIfam" id="NF001658">
    <property type="entry name" value="PRK00423.1"/>
    <property type="match status" value="1"/>
</dbReference>
<dbReference type="PANTHER" id="PTHR11618:SF13">
    <property type="entry name" value="TRANSCRIPTION INITIATION FACTOR IIB"/>
    <property type="match status" value="1"/>
</dbReference>
<dbReference type="PANTHER" id="PTHR11618">
    <property type="entry name" value="TRANSCRIPTION INITIATION FACTOR IIB-RELATED"/>
    <property type="match status" value="1"/>
</dbReference>
<dbReference type="Pfam" id="PF00382">
    <property type="entry name" value="TFIIB"/>
    <property type="match status" value="2"/>
</dbReference>
<dbReference type="Pfam" id="PF08271">
    <property type="entry name" value="Zn_Ribbon_TF"/>
    <property type="match status" value="1"/>
</dbReference>
<dbReference type="PRINTS" id="PR00685">
    <property type="entry name" value="TIFACTORIIB"/>
</dbReference>
<dbReference type="SMART" id="SM00385">
    <property type="entry name" value="CYCLIN"/>
    <property type="match status" value="2"/>
</dbReference>
<dbReference type="SUPFAM" id="SSF47954">
    <property type="entry name" value="Cyclin-like"/>
    <property type="match status" value="2"/>
</dbReference>
<dbReference type="SUPFAM" id="SSF57783">
    <property type="entry name" value="Zinc beta-ribbon"/>
    <property type="match status" value="1"/>
</dbReference>
<dbReference type="PROSITE" id="PS00782">
    <property type="entry name" value="TFIIB"/>
    <property type="match status" value="2"/>
</dbReference>
<accession>P58111</accession>